<organism>
    <name type="scientific">Brachyspira hyodysenteriae (strain ATCC 49526 / WA1)</name>
    <dbReference type="NCBI Taxonomy" id="565034"/>
    <lineage>
        <taxon>Bacteria</taxon>
        <taxon>Pseudomonadati</taxon>
        <taxon>Spirochaetota</taxon>
        <taxon>Spirochaetia</taxon>
        <taxon>Brachyspirales</taxon>
        <taxon>Brachyspiraceae</taxon>
        <taxon>Brachyspira</taxon>
    </lineage>
</organism>
<feature type="chain" id="PRO_1000200716" description="Peptide deformylase">
    <location>
        <begin position="1"/>
        <end position="187"/>
    </location>
</feature>
<feature type="active site" evidence="1">
    <location>
        <position position="139"/>
    </location>
</feature>
<feature type="binding site" evidence="1">
    <location>
        <position position="96"/>
    </location>
    <ligand>
        <name>Fe cation</name>
        <dbReference type="ChEBI" id="CHEBI:24875"/>
    </ligand>
</feature>
<feature type="binding site" evidence="1">
    <location>
        <position position="138"/>
    </location>
    <ligand>
        <name>Fe cation</name>
        <dbReference type="ChEBI" id="CHEBI:24875"/>
    </ligand>
</feature>
<feature type="binding site" evidence="1">
    <location>
        <position position="142"/>
    </location>
    <ligand>
        <name>Fe cation</name>
        <dbReference type="ChEBI" id="CHEBI:24875"/>
    </ligand>
</feature>
<accession>C0QZQ2</accession>
<protein>
    <recommendedName>
        <fullName evidence="1">Peptide deformylase</fullName>
        <shortName evidence="1">PDF</shortName>
        <ecNumber evidence="1">3.5.1.88</ecNumber>
    </recommendedName>
    <alternativeName>
        <fullName evidence="1">Polypeptide deformylase</fullName>
    </alternativeName>
</protein>
<dbReference type="EC" id="3.5.1.88" evidence="1"/>
<dbReference type="EMBL" id="CP001357">
    <property type="protein sequence ID" value="ACN83340.1"/>
    <property type="molecule type" value="Genomic_DNA"/>
</dbReference>
<dbReference type="RefSeq" id="WP_012670389.1">
    <property type="nucleotide sequence ID" value="NC_012225.1"/>
</dbReference>
<dbReference type="SMR" id="C0QZQ2"/>
<dbReference type="STRING" id="565034.BHWA1_00847"/>
<dbReference type="KEGG" id="bhy:BHWA1_00847"/>
<dbReference type="eggNOG" id="COG0242">
    <property type="taxonomic scope" value="Bacteria"/>
</dbReference>
<dbReference type="HOGENOM" id="CLU_061901_2_0_12"/>
<dbReference type="Proteomes" id="UP000001803">
    <property type="component" value="Chromosome"/>
</dbReference>
<dbReference type="GO" id="GO:0046872">
    <property type="term" value="F:metal ion binding"/>
    <property type="evidence" value="ECO:0007669"/>
    <property type="project" value="UniProtKB-KW"/>
</dbReference>
<dbReference type="GO" id="GO:0042586">
    <property type="term" value="F:peptide deformylase activity"/>
    <property type="evidence" value="ECO:0007669"/>
    <property type="project" value="UniProtKB-UniRule"/>
</dbReference>
<dbReference type="GO" id="GO:0043686">
    <property type="term" value="P:co-translational protein modification"/>
    <property type="evidence" value="ECO:0007669"/>
    <property type="project" value="TreeGrafter"/>
</dbReference>
<dbReference type="GO" id="GO:0006412">
    <property type="term" value="P:translation"/>
    <property type="evidence" value="ECO:0007669"/>
    <property type="project" value="UniProtKB-UniRule"/>
</dbReference>
<dbReference type="CDD" id="cd00487">
    <property type="entry name" value="Pep_deformylase"/>
    <property type="match status" value="1"/>
</dbReference>
<dbReference type="Gene3D" id="3.90.45.10">
    <property type="entry name" value="Peptide deformylase"/>
    <property type="match status" value="1"/>
</dbReference>
<dbReference type="HAMAP" id="MF_00163">
    <property type="entry name" value="Pep_deformylase"/>
    <property type="match status" value="1"/>
</dbReference>
<dbReference type="InterPro" id="IPR023635">
    <property type="entry name" value="Peptide_deformylase"/>
</dbReference>
<dbReference type="InterPro" id="IPR036821">
    <property type="entry name" value="Peptide_deformylase_sf"/>
</dbReference>
<dbReference type="NCBIfam" id="TIGR00079">
    <property type="entry name" value="pept_deformyl"/>
    <property type="match status" value="1"/>
</dbReference>
<dbReference type="NCBIfam" id="NF001159">
    <property type="entry name" value="PRK00150.1-3"/>
    <property type="match status" value="1"/>
</dbReference>
<dbReference type="PANTHER" id="PTHR10458">
    <property type="entry name" value="PEPTIDE DEFORMYLASE"/>
    <property type="match status" value="1"/>
</dbReference>
<dbReference type="PANTHER" id="PTHR10458:SF22">
    <property type="entry name" value="PEPTIDE DEFORMYLASE"/>
    <property type="match status" value="1"/>
</dbReference>
<dbReference type="Pfam" id="PF01327">
    <property type="entry name" value="Pep_deformylase"/>
    <property type="match status" value="1"/>
</dbReference>
<dbReference type="PIRSF" id="PIRSF004749">
    <property type="entry name" value="Pep_def"/>
    <property type="match status" value="1"/>
</dbReference>
<dbReference type="PRINTS" id="PR01576">
    <property type="entry name" value="PDEFORMYLASE"/>
</dbReference>
<dbReference type="SUPFAM" id="SSF56420">
    <property type="entry name" value="Peptide deformylase"/>
    <property type="match status" value="1"/>
</dbReference>
<gene>
    <name evidence="1" type="primary">def</name>
    <name type="ordered locus">BHWA1_00847</name>
</gene>
<evidence type="ECO:0000255" key="1">
    <source>
        <dbReference type="HAMAP-Rule" id="MF_00163"/>
    </source>
</evidence>
<reference key="1">
    <citation type="journal article" date="2009" name="PLoS ONE">
        <title>Genome sequence of the pathogenic intestinal spirochete Brachyspira hyodysenteriae reveals adaptations to its lifestyle in the porcine large intestine.</title>
        <authorList>
            <person name="Bellgard M.I."/>
            <person name="Wanchanthuek P."/>
            <person name="La T."/>
            <person name="Ryan K."/>
            <person name="Moolhuijzen P."/>
            <person name="Albertyn Z."/>
            <person name="Shaban B."/>
            <person name="Motro Y."/>
            <person name="Dunn D.S."/>
            <person name="Schibeci D."/>
            <person name="Hunter A."/>
            <person name="Barrero R."/>
            <person name="Phillips N.D."/>
            <person name="Hampson D.J."/>
        </authorList>
    </citation>
    <scope>NUCLEOTIDE SEQUENCE [LARGE SCALE GENOMIC DNA]</scope>
    <source>
        <strain>ATCC 49526 / WA1</strain>
    </source>
</reference>
<name>DEF_BRAHW</name>
<keyword id="KW-0378">Hydrolase</keyword>
<keyword id="KW-0408">Iron</keyword>
<keyword id="KW-0479">Metal-binding</keyword>
<keyword id="KW-0648">Protein biosynthesis</keyword>
<comment type="function">
    <text evidence="1">Removes the formyl group from the N-terminal Met of newly synthesized proteins. Requires at least a dipeptide for an efficient rate of reaction. N-terminal L-methionine is a prerequisite for activity but the enzyme has broad specificity at other positions.</text>
</comment>
<comment type="catalytic activity">
    <reaction evidence="1">
        <text>N-terminal N-formyl-L-methionyl-[peptide] + H2O = N-terminal L-methionyl-[peptide] + formate</text>
        <dbReference type="Rhea" id="RHEA:24420"/>
        <dbReference type="Rhea" id="RHEA-COMP:10639"/>
        <dbReference type="Rhea" id="RHEA-COMP:10640"/>
        <dbReference type="ChEBI" id="CHEBI:15377"/>
        <dbReference type="ChEBI" id="CHEBI:15740"/>
        <dbReference type="ChEBI" id="CHEBI:49298"/>
        <dbReference type="ChEBI" id="CHEBI:64731"/>
        <dbReference type="EC" id="3.5.1.88"/>
    </reaction>
</comment>
<comment type="cofactor">
    <cofactor evidence="1">
        <name>Fe(2+)</name>
        <dbReference type="ChEBI" id="CHEBI:29033"/>
    </cofactor>
    <text evidence="1">Binds 1 Fe(2+) ion.</text>
</comment>
<comment type="similarity">
    <text evidence="1">Belongs to the polypeptide deformylase family.</text>
</comment>
<proteinExistence type="inferred from homology"/>
<sequence length="187" mass="21993">MLRELVIYGDERLQKVSEKIEKIDDEILTLIDDMFETMYKERGVGLAAVQIGVLKRLVVISVPDFDDEEKPDFKLALINPEIIWHNDETESLEEGCLSFPEIRDDVARYTQIKVKYLDREGNEQILDAENYIAKVLQHEIDHTNGISFIDRLESYQKRRLKRELKELRNNTVRGIKKVNNREMLKNS</sequence>